<proteinExistence type="evidence at transcript level"/>
<sequence>MATIWFLSLLFLCCILLAAFKHKKRRTNQQQPPSPPGFPIIGNLHQLGELPHQSLWSLSKTYGPVMLLKLGSVPTVVVSSSETAKQVLKINDLHCCSRPSLAGAKELSYNYLDIAFSPFDDYWKELRRICVQELFSAKRVHSIQPIKEEEVRKLIVSATESASQKSPVNLSEKFLDLTVSVICKAAFSLDFHTSVLNNDGFDKLIHDAFLFLGSFSASNFFPNGGWIIDWLTGLQRRREKSVKDLDVFYQQMFDLHKQENKQGVEDFVDLLLKLEKEETVLGYGKLTRNHVKAILMNVLLGAINTSAMTMTWAMAELIRNPRVMKKVQSEIRNQMINKSVITLDDIDHLPYLKMVIKETWRLHPPVPLLLPREVMSEFEINGYKIQPKTLLYVNVWAIGRDPDSWKDADMFYPERFMDNNIDAKGQNFELLPFGSGRRICPGMYMGTTMVEFGLANMLYQFDWEVPDGMVVEDIDMEESPGLAVGKKNELLLVPVKYLGH</sequence>
<dbReference type="EC" id="1.14.-.-"/>
<dbReference type="EMBL" id="AC004136">
    <property type="protein sequence ID" value="AAC18928.2"/>
    <property type="molecule type" value="Genomic_DNA"/>
</dbReference>
<dbReference type="EMBL" id="CP002685">
    <property type="protein sequence ID" value="AEC05601.1"/>
    <property type="molecule type" value="Genomic_DNA"/>
</dbReference>
<dbReference type="EMBL" id="AY072124">
    <property type="protein sequence ID" value="AAL59946.1"/>
    <property type="molecule type" value="mRNA"/>
</dbReference>
<dbReference type="PIR" id="T00605">
    <property type="entry name" value="T00605"/>
</dbReference>
<dbReference type="RefSeq" id="NP_178362.1">
    <property type="nucleotide sequence ID" value="NM_126314.3"/>
</dbReference>
<dbReference type="SMR" id="O64718"/>
<dbReference type="FunCoup" id="O64718">
    <property type="interactions" value="386"/>
</dbReference>
<dbReference type="STRING" id="3702.O64718"/>
<dbReference type="PaxDb" id="3702-AT2G02580.1"/>
<dbReference type="ProteomicsDB" id="239200"/>
<dbReference type="EnsemblPlants" id="AT2G02580.1">
    <property type="protein sequence ID" value="AT2G02580.1"/>
    <property type="gene ID" value="AT2G02580"/>
</dbReference>
<dbReference type="GeneID" id="814788"/>
<dbReference type="Gramene" id="AT2G02580.1">
    <property type="protein sequence ID" value="AT2G02580.1"/>
    <property type="gene ID" value="AT2G02580"/>
</dbReference>
<dbReference type="KEGG" id="ath:AT2G02580"/>
<dbReference type="Araport" id="AT2G02580"/>
<dbReference type="TAIR" id="AT2G02580">
    <property type="gene designation" value="CYP71B9"/>
</dbReference>
<dbReference type="eggNOG" id="KOG0156">
    <property type="taxonomic scope" value="Eukaryota"/>
</dbReference>
<dbReference type="HOGENOM" id="CLU_001570_4_1_1"/>
<dbReference type="InParanoid" id="O64718"/>
<dbReference type="OMA" id="LYQFDWE"/>
<dbReference type="PhylomeDB" id="O64718"/>
<dbReference type="BioCyc" id="ARA:AT2G02580-MONOMER"/>
<dbReference type="PRO" id="PR:O64718"/>
<dbReference type="Proteomes" id="UP000006548">
    <property type="component" value="Chromosome 2"/>
</dbReference>
<dbReference type="ExpressionAtlas" id="O64718">
    <property type="expression patterns" value="baseline and differential"/>
</dbReference>
<dbReference type="GO" id="GO:0016020">
    <property type="term" value="C:membrane"/>
    <property type="evidence" value="ECO:0007669"/>
    <property type="project" value="UniProtKB-SubCell"/>
</dbReference>
<dbReference type="GO" id="GO:0020037">
    <property type="term" value="F:heme binding"/>
    <property type="evidence" value="ECO:0007669"/>
    <property type="project" value="InterPro"/>
</dbReference>
<dbReference type="GO" id="GO:0005506">
    <property type="term" value="F:iron ion binding"/>
    <property type="evidence" value="ECO:0007669"/>
    <property type="project" value="InterPro"/>
</dbReference>
<dbReference type="GO" id="GO:0004497">
    <property type="term" value="F:monooxygenase activity"/>
    <property type="evidence" value="ECO:0007669"/>
    <property type="project" value="UniProtKB-KW"/>
</dbReference>
<dbReference type="GO" id="GO:0016705">
    <property type="term" value="F:oxidoreductase activity, acting on paired donors, with incorporation or reduction of molecular oxygen"/>
    <property type="evidence" value="ECO:0007669"/>
    <property type="project" value="InterPro"/>
</dbReference>
<dbReference type="CDD" id="cd11072">
    <property type="entry name" value="CYP71-like"/>
    <property type="match status" value="1"/>
</dbReference>
<dbReference type="FunFam" id="1.10.630.10:FF:000011">
    <property type="entry name" value="Cytochrome P450 83B1"/>
    <property type="match status" value="1"/>
</dbReference>
<dbReference type="Gene3D" id="1.10.630.10">
    <property type="entry name" value="Cytochrome P450"/>
    <property type="match status" value="1"/>
</dbReference>
<dbReference type="InterPro" id="IPR001128">
    <property type="entry name" value="Cyt_P450"/>
</dbReference>
<dbReference type="InterPro" id="IPR017972">
    <property type="entry name" value="Cyt_P450_CS"/>
</dbReference>
<dbReference type="InterPro" id="IPR002401">
    <property type="entry name" value="Cyt_P450_E_grp-I"/>
</dbReference>
<dbReference type="InterPro" id="IPR036396">
    <property type="entry name" value="Cyt_P450_sf"/>
</dbReference>
<dbReference type="PANTHER" id="PTHR47955:SF19">
    <property type="entry name" value="CYTOCHROME P450 71A9-LIKE ISOFORM X1"/>
    <property type="match status" value="1"/>
</dbReference>
<dbReference type="PANTHER" id="PTHR47955">
    <property type="entry name" value="CYTOCHROME P450 FAMILY 71 PROTEIN"/>
    <property type="match status" value="1"/>
</dbReference>
<dbReference type="Pfam" id="PF00067">
    <property type="entry name" value="p450"/>
    <property type="match status" value="1"/>
</dbReference>
<dbReference type="PRINTS" id="PR00463">
    <property type="entry name" value="EP450I"/>
</dbReference>
<dbReference type="PRINTS" id="PR00385">
    <property type="entry name" value="P450"/>
</dbReference>
<dbReference type="SUPFAM" id="SSF48264">
    <property type="entry name" value="Cytochrome P450"/>
    <property type="match status" value="1"/>
</dbReference>
<dbReference type="PROSITE" id="PS00086">
    <property type="entry name" value="CYTOCHROME_P450"/>
    <property type="match status" value="1"/>
</dbReference>
<feature type="chain" id="PRO_0000052087" description="Cytochrome P450 71B9">
    <location>
        <begin position="1"/>
        <end position="500"/>
    </location>
</feature>
<feature type="transmembrane region" description="Helical" evidence="2">
    <location>
        <begin position="1"/>
        <end position="21"/>
    </location>
</feature>
<feature type="binding site" description="axial binding residue" evidence="1">
    <location>
        <position position="440"/>
    </location>
    <ligand>
        <name>heme</name>
        <dbReference type="ChEBI" id="CHEBI:30413"/>
    </ligand>
    <ligandPart>
        <name>Fe</name>
        <dbReference type="ChEBI" id="CHEBI:18248"/>
    </ligandPart>
</feature>
<feature type="sequence conflict" description="In Ref. 3; AAL59946." evidence="3" ref="3">
    <original>P</original>
    <variation>A</variation>
    <location>
        <position position="321"/>
    </location>
</feature>
<gene>
    <name type="primary">CYP71B9</name>
    <name type="ordered locus">At2g02580</name>
    <name type="ORF">T8K22.12</name>
</gene>
<comment type="cofactor">
    <cofactor evidence="1">
        <name>heme</name>
        <dbReference type="ChEBI" id="CHEBI:30413"/>
    </cofactor>
</comment>
<comment type="subcellular location">
    <subcellularLocation>
        <location evidence="3">Membrane</location>
        <topology evidence="3">Single-pass membrane protein</topology>
    </subcellularLocation>
</comment>
<comment type="similarity">
    <text evidence="3">Belongs to the cytochrome P450 family.</text>
</comment>
<accession>O64718</accession>
<accession>Q8VYE9</accession>
<protein>
    <recommendedName>
        <fullName>Cytochrome P450 71B9</fullName>
        <ecNumber>1.14.-.-</ecNumber>
    </recommendedName>
</protein>
<keyword id="KW-0349">Heme</keyword>
<keyword id="KW-0408">Iron</keyword>
<keyword id="KW-0472">Membrane</keyword>
<keyword id="KW-0479">Metal-binding</keyword>
<keyword id="KW-0503">Monooxygenase</keyword>
<keyword id="KW-0560">Oxidoreductase</keyword>
<keyword id="KW-1185">Reference proteome</keyword>
<keyword id="KW-0812">Transmembrane</keyword>
<keyword id="KW-1133">Transmembrane helix</keyword>
<name>C71B9_ARATH</name>
<evidence type="ECO:0000250" key="1"/>
<evidence type="ECO:0000255" key="2"/>
<evidence type="ECO:0000305" key="3"/>
<reference key="1">
    <citation type="journal article" date="1999" name="Nature">
        <title>Sequence and analysis of chromosome 2 of the plant Arabidopsis thaliana.</title>
        <authorList>
            <person name="Lin X."/>
            <person name="Kaul S."/>
            <person name="Rounsley S.D."/>
            <person name="Shea T.P."/>
            <person name="Benito M.-I."/>
            <person name="Town C.D."/>
            <person name="Fujii C.Y."/>
            <person name="Mason T.M."/>
            <person name="Bowman C.L."/>
            <person name="Barnstead M.E."/>
            <person name="Feldblyum T.V."/>
            <person name="Buell C.R."/>
            <person name="Ketchum K.A."/>
            <person name="Lee J.J."/>
            <person name="Ronning C.M."/>
            <person name="Koo H.L."/>
            <person name="Moffat K.S."/>
            <person name="Cronin L.A."/>
            <person name="Shen M."/>
            <person name="Pai G."/>
            <person name="Van Aken S."/>
            <person name="Umayam L."/>
            <person name="Tallon L.J."/>
            <person name="Gill J.E."/>
            <person name="Adams M.D."/>
            <person name="Carrera A.J."/>
            <person name="Creasy T.H."/>
            <person name="Goodman H.M."/>
            <person name="Somerville C.R."/>
            <person name="Copenhaver G.P."/>
            <person name="Preuss D."/>
            <person name="Nierman W.C."/>
            <person name="White O."/>
            <person name="Eisen J.A."/>
            <person name="Salzberg S.L."/>
            <person name="Fraser C.M."/>
            <person name="Venter J.C."/>
        </authorList>
    </citation>
    <scope>NUCLEOTIDE SEQUENCE [LARGE SCALE GENOMIC DNA]</scope>
    <source>
        <strain>cv. Columbia</strain>
    </source>
</reference>
<reference key="2">
    <citation type="journal article" date="2017" name="Plant J.">
        <title>Araport11: a complete reannotation of the Arabidopsis thaliana reference genome.</title>
        <authorList>
            <person name="Cheng C.Y."/>
            <person name="Krishnakumar V."/>
            <person name="Chan A.P."/>
            <person name="Thibaud-Nissen F."/>
            <person name="Schobel S."/>
            <person name="Town C.D."/>
        </authorList>
    </citation>
    <scope>GENOME REANNOTATION</scope>
    <source>
        <strain>cv. Columbia</strain>
    </source>
</reference>
<reference key="3">
    <citation type="journal article" date="2003" name="Science">
        <title>Empirical analysis of transcriptional activity in the Arabidopsis genome.</title>
        <authorList>
            <person name="Yamada K."/>
            <person name="Lim J."/>
            <person name="Dale J.M."/>
            <person name="Chen H."/>
            <person name="Shinn P."/>
            <person name="Palm C.J."/>
            <person name="Southwick A.M."/>
            <person name="Wu H.C."/>
            <person name="Kim C.J."/>
            <person name="Nguyen M."/>
            <person name="Pham P.K."/>
            <person name="Cheuk R.F."/>
            <person name="Karlin-Newmann G."/>
            <person name="Liu S.X."/>
            <person name="Lam B."/>
            <person name="Sakano H."/>
            <person name="Wu T."/>
            <person name="Yu G."/>
            <person name="Miranda M."/>
            <person name="Quach H.L."/>
            <person name="Tripp M."/>
            <person name="Chang C.H."/>
            <person name="Lee J.M."/>
            <person name="Toriumi M.J."/>
            <person name="Chan M.M."/>
            <person name="Tang C.C."/>
            <person name="Onodera C.S."/>
            <person name="Deng J.M."/>
            <person name="Akiyama K."/>
            <person name="Ansari Y."/>
            <person name="Arakawa T."/>
            <person name="Banh J."/>
            <person name="Banno F."/>
            <person name="Bowser L."/>
            <person name="Brooks S.Y."/>
            <person name="Carninci P."/>
            <person name="Chao Q."/>
            <person name="Choy N."/>
            <person name="Enju A."/>
            <person name="Goldsmith A.D."/>
            <person name="Gurjal M."/>
            <person name="Hansen N.F."/>
            <person name="Hayashizaki Y."/>
            <person name="Johnson-Hopson C."/>
            <person name="Hsuan V.W."/>
            <person name="Iida K."/>
            <person name="Karnes M."/>
            <person name="Khan S."/>
            <person name="Koesema E."/>
            <person name="Ishida J."/>
            <person name="Jiang P.X."/>
            <person name="Jones T."/>
            <person name="Kawai J."/>
            <person name="Kamiya A."/>
            <person name="Meyers C."/>
            <person name="Nakajima M."/>
            <person name="Narusaka M."/>
            <person name="Seki M."/>
            <person name="Sakurai T."/>
            <person name="Satou M."/>
            <person name="Tamse R."/>
            <person name="Vaysberg M."/>
            <person name="Wallender E.K."/>
            <person name="Wong C."/>
            <person name="Yamamura Y."/>
            <person name="Yuan S."/>
            <person name="Shinozaki K."/>
            <person name="Davis R.W."/>
            <person name="Theologis A."/>
            <person name="Ecker J.R."/>
        </authorList>
    </citation>
    <scope>NUCLEOTIDE SEQUENCE [LARGE SCALE MRNA]</scope>
    <source>
        <strain>cv. Columbia</strain>
    </source>
</reference>
<organism>
    <name type="scientific">Arabidopsis thaliana</name>
    <name type="common">Mouse-ear cress</name>
    <dbReference type="NCBI Taxonomy" id="3702"/>
    <lineage>
        <taxon>Eukaryota</taxon>
        <taxon>Viridiplantae</taxon>
        <taxon>Streptophyta</taxon>
        <taxon>Embryophyta</taxon>
        <taxon>Tracheophyta</taxon>
        <taxon>Spermatophyta</taxon>
        <taxon>Magnoliopsida</taxon>
        <taxon>eudicotyledons</taxon>
        <taxon>Gunneridae</taxon>
        <taxon>Pentapetalae</taxon>
        <taxon>rosids</taxon>
        <taxon>malvids</taxon>
        <taxon>Brassicales</taxon>
        <taxon>Brassicaceae</taxon>
        <taxon>Camelineae</taxon>
        <taxon>Arabidopsis</taxon>
    </lineage>
</organism>